<proteinExistence type="inferred from homology"/>
<accession>A3MX83</accession>
<dbReference type="EMBL" id="CP000561">
    <property type="protein sequence ID" value="ABO09250.1"/>
    <property type="molecule type" value="Genomic_DNA"/>
</dbReference>
<dbReference type="RefSeq" id="WP_011850508.1">
    <property type="nucleotide sequence ID" value="NC_009073.1"/>
</dbReference>
<dbReference type="SMR" id="A3MX83"/>
<dbReference type="STRING" id="410359.Pcal_1833"/>
<dbReference type="GeneID" id="4910076"/>
<dbReference type="KEGG" id="pcl:Pcal_1833"/>
<dbReference type="eggNOG" id="arCOG04289">
    <property type="taxonomic scope" value="Archaea"/>
</dbReference>
<dbReference type="HOGENOM" id="CLU_062853_4_0_2"/>
<dbReference type="OrthoDB" id="10382at2157"/>
<dbReference type="Proteomes" id="UP000001431">
    <property type="component" value="Chromosome"/>
</dbReference>
<dbReference type="GO" id="GO:0015934">
    <property type="term" value="C:large ribosomal subunit"/>
    <property type="evidence" value="ECO:0007669"/>
    <property type="project" value="InterPro"/>
</dbReference>
<dbReference type="GO" id="GO:0019843">
    <property type="term" value="F:rRNA binding"/>
    <property type="evidence" value="ECO:0007669"/>
    <property type="project" value="UniProtKB-UniRule"/>
</dbReference>
<dbReference type="GO" id="GO:0003735">
    <property type="term" value="F:structural constituent of ribosome"/>
    <property type="evidence" value="ECO:0007669"/>
    <property type="project" value="InterPro"/>
</dbReference>
<dbReference type="GO" id="GO:0000049">
    <property type="term" value="F:tRNA binding"/>
    <property type="evidence" value="ECO:0007669"/>
    <property type="project" value="UniProtKB-KW"/>
</dbReference>
<dbReference type="GO" id="GO:0006417">
    <property type="term" value="P:regulation of translation"/>
    <property type="evidence" value="ECO:0007669"/>
    <property type="project" value="UniProtKB-KW"/>
</dbReference>
<dbReference type="GO" id="GO:0006412">
    <property type="term" value="P:translation"/>
    <property type="evidence" value="ECO:0007669"/>
    <property type="project" value="UniProtKB-UniRule"/>
</dbReference>
<dbReference type="CDD" id="cd00403">
    <property type="entry name" value="Ribosomal_L1"/>
    <property type="match status" value="1"/>
</dbReference>
<dbReference type="FunFam" id="3.40.50.790:FF:000005">
    <property type="entry name" value="50S ribosomal protein L1"/>
    <property type="match status" value="1"/>
</dbReference>
<dbReference type="Gene3D" id="3.30.190.20">
    <property type="match status" value="1"/>
</dbReference>
<dbReference type="Gene3D" id="3.40.50.790">
    <property type="match status" value="1"/>
</dbReference>
<dbReference type="HAMAP" id="MF_01318_A">
    <property type="entry name" value="Ribosomal_uL1_A"/>
    <property type="match status" value="1"/>
</dbReference>
<dbReference type="InterPro" id="IPR002143">
    <property type="entry name" value="Ribosomal_uL1"/>
</dbReference>
<dbReference type="InterPro" id="IPR023674">
    <property type="entry name" value="Ribosomal_uL1-like"/>
</dbReference>
<dbReference type="InterPro" id="IPR028364">
    <property type="entry name" value="Ribosomal_uL1/biogenesis"/>
</dbReference>
<dbReference type="InterPro" id="IPR016095">
    <property type="entry name" value="Ribosomal_uL1_3-a/b-sand"/>
</dbReference>
<dbReference type="InterPro" id="IPR023669">
    <property type="entry name" value="Ribosomal_uL1_arc"/>
</dbReference>
<dbReference type="InterPro" id="IPR023673">
    <property type="entry name" value="Ribosomal_uL1_CS"/>
</dbReference>
<dbReference type="NCBIfam" id="NF003244">
    <property type="entry name" value="PRK04203.1"/>
    <property type="match status" value="1"/>
</dbReference>
<dbReference type="PANTHER" id="PTHR36427">
    <property type="entry name" value="54S RIBOSOMAL PROTEIN L1, MITOCHONDRIAL"/>
    <property type="match status" value="1"/>
</dbReference>
<dbReference type="PANTHER" id="PTHR36427:SF3">
    <property type="entry name" value="LARGE RIBOSOMAL SUBUNIT PROTEIN UL1M"/>
    <property type="match status" value="1"/>
</dbReference>
<dbReference type="Pfam" id="PF00687">
    <property type="entry name" value="Ribosomal_L1"/>
    <property type="match status" value="1"/>
</dbReference>
<dbReference type="PIRSF" id="PIRSF002155">
    <property type="entry name" value="Ribosomal_L1"/>
    <property type="match status" value="1"/>
</dbReference>
<dbReference type="SUPFAM" id="SSF56808">
    <property type="entry name" value="Ribosomal protein L1"/>
    <property type="match status" value="1"/>
</dbReference>
<dbReference type="PROSITE" id="PS01199">
    <property type="entry name" value="RIBOSOMAL_L1"/>
    <property type="match status" value="1"/>
</dbReference>
<reference key="1">
    <citation type="submission" date="2007-02" db="EMBL/GenBank/DDBJ databases">
        <title>Complete sequence of Pyrobaculum calidifontis JCM 11548.</title>
        <authorList>
            <consortium name="US DOE Joint Genome Institute"/>
            <person name="Copeland A."/>
            <person name="Lucas S."/>
            <person name="Lapidus A."/>
            <person name="Barry K."/>
            <person name="Glavina del Rio T."/>
            <person name="Dalin E."/>
            <person name="Tice H."/>
            <person name="Pitluck S."/>
            <person name="Chain P."/>
            <person name="Malfatti S."/>
            <person name="Shin M."/>
            <person name="Vergez L."/>
            <person name="Schmutz J."/>
            <person name="Larimer F."/>
            <person name="Land M."/>
            <person name="Hauser L."/>
            <person name="Kyrpides N."/>
            <person name="Mikhailova N."/>
            <person name="Cozen A.E."/>
            <person name="Fitz-Gibbon S.T."/>
            <person name="House C.H."/>
            <person name="Saltikov C."/>
            <person name="Lowe T.M."/>
            <person name="Richardson P."/>
        </authorList>
    </citation>
    <scope>NUCLEOTIDE SEQUENCE [LARGE SCALE GENOMIC DNA]</scope>
    <source>
        <strain>DSM 21063 / JCM 11548 / VA1</strain>
    </source>
</reference>
<sequence length="222" mass="25075">MSAVVQREALLKKIDEALKSGKKRRFRQSVELIVVLRGIDLSKPENRINLLVELPHPPKLNKIAAFAHGAFETQAKNAGVDAVITRQEVEGLAGNKRAIRKLAKQYDFFIAPPDLMPLLGRVIGPIFGPRGKMPEVVPPNVDVKTVVERLRRVVRVRLRNEPVIKVRVGAEGQKPEEILTNILAVLEELNRKFPLRQYLRDIYIKKTMSPPVRIKPAEVLAR</sequence>
<protein>
    <recommendedName>
        <fullName evidence="1">Large ribosomal subunit protein uL1</fullName>
    </recommendedName>
    <alternativeName>
        <fullName evidence="2">50S ribosomal protein L1</fullName>
    </alternativeName>
</protein>
<keyword id="KW-0678">Repressor</keyword>
<keyword id="KW-0687">Ribonucleoprotein</keyword>
<keyword id="KW-0689">Ribosomal protein</keyword>
<keyword id="KW-0694">RNA-binding</keyword>
<keyword id="KW-0699">rRNA-binding</keyword>
<keyword id="KW-0810">Translation regulation</keyword>
<keyword id="KW-0820">tRNA-binding</keyword>
<comment type="function">
    <text evidence="1">Binds directly to 23S rRNA. Probably involved in E site tRNA release.</text>
</comment>
<comment type="function">
    <text evidence="1">Protein L1 is also a translational repressor protein, it controls the translation of its operon by binding to its mRNA.</text>
</comment>
<comment type="subunit">
    <text evidence="1">Part of the 50S ribosomal subunit.</text>
</comment>
<comment type="similarity">
    <text evidence="1">Belongs to the universal ribosomal protein uL1 family.</text>
</comment>
<evidence type="ECO:0000255" key="1">
    <source>
        <dbReference type="HAMAP-Rule" id="MF_01318"/>
    </source>
</evidence>
<evidence type="ECO:0000305" key="2"/>
<gene>
    <name evidence="1" type="primary">rpl1</name>
    <name type="ordered locus">Pcal_1833</name>
</gene>
<name>RL1_PYRCJ</name>
<feature type="chain" id="PRO_0000308153" description="Large ribosomal subunit protein uL1">
    <location>
        <begin position="1"/>
        <end position="222"/>
    </location>
</feature>
<organism>
    <name type="scientific">Pyrobaculum calidifontis (strain DSM 21063 / JCM 11548 / VA1)</name>
    <dbReference type="NCBI Taxonomy" id="410359"/>
    <lineage>
        <taxon>Archaea</taxon>
        <taxon>Thermoproteota</taxon>
        <taxon>Thermoprotei</taxon>
        <taxon>Thermoproteales</taxon>
        <taxon>Thermoproteaceae</taxon>
        <taxon>Pyrobaculum</taxon>
    </lineage>
</organism>